<sequence length="264" mass="29862">MYIVTTSFCKIQLQMFTIVSDAAETIKKLFVVFNDLVDIANLSFTNEGLSVQSMDTSHVSLVNLKIGKSYFKDYSIAQEATVGIKISNFVRILDCVGNDEITISFTYDNPDELIVKSEYSDFKMKTIDIETEEMEIPEMDIDVLIDADSNIIQKYLKNMAGFGDTVKIYTQDDVVHMKTAGEIGEVDLQIHDQRVEIKGRLTCEFATRYLMTFAKAAGISKRVVIKLLDDQPGIFEYVFDAESDSKISFFLAPKVKDDGDDEEY</sequence>
<accession>O41056</accession>
<name>PCNA2_PBCV1</name>
<reference key="1">
    <citation type="journal article" date="1997" name="Virology">
        <title>Analysis of 74 kb of DNA located at the right end of the 330-kb chlorella virus PBCV-1 genome.</title>
        <authorList>
            <person name="Li Y."/>
            <person name="Lu Z."/>
            <person name="Sun L."/>
            <person name="Ropp S."/>
            <person name="Kutish G.F."/>
            <person name="Rock D.L."/>
            <person name="van Etten J.L."/>
        </authorList>
    </citation>
    <scope>NUCLEOTIDE SEQUENCE [LARGE SCALE GENOMIC DNA]</scope>
</reference>
<proteinExistence type="inferred from homology"/>
<keyword id="KW-0235">DNA replication</keyword>
<keyword id="KW-0238">DNA-binding</keyword>
<keyword id="KW-1185">Reference proteome</keyword>
<organism>
    <name type="scientific">Paramecium bursaria Chlorella virus 1</name>
    <name type="common">PBCV-1</name>
    <dbReference type="NCBI Taxonomy" id="10506"/>
    <lineage>
        <taxon>Viruses</taxon>
        <taxon>Varidnaviria</taxon>
        <taxon>Bamfordvirae</taxon>
        <taxon>Nucleocytoviricota</taxon>
        <taxon>Megaviricetes</taxon>
        <taxon>Algavirales</taxon>
        <taxon>Phycodnaviridae</taxon>
        <taxon>Chlorovirus</taxon>
    </lineage>
</organism>
<organismHost>
    <name type="scientific">Chlorella</name>
    <dbReference type="NCBI Taxonomy" id="3071"/>
</organismHost>
<evidence type="ECO:0000250" key="1"/>
<evidence type="ECO:0000255" key="2"/>
<evidence type="ECO:0000305" key="3"/>
<dbReference type="EMBL" id="JF411744">
    <property type="protein sequence ID" value="AAC96927.1"/>
    <property type="molecule type" value="Genomic_DNA"/>
</dbReference>
<dbReference type="PIR" id="T18076">
    <property type="entry name" value="T18076"/>
</dbReference>
<dbReference type="RefSeq" id="NP_048930.1">
    <property type="nucleotide sequence ID" value="NC_000852.5"/>
</dbReference>
<dbReference type="SMR" id="O41056"/>
<dbReference type="GeneID" id="918072"/>
<dbReference type="KEGG" id="vg:918072"/>
<dbReference type="OrthoDB" id="7999at10239"/>
<dbReference type="Proteomes" id="UP000000862">
    <property type="component" value="Genome"/>
</dbReference>
<dbReference type="GO" id="GO:0003677">
    <property type="term" value="F:DNA binding"/>
    <property type="evidence" value="ECO:0007669"/>
    <property type="project" value="UniProtKB-KW"/>
</dbReference>
<dbReference type="GO" id="GO:0030337">
    <property type="term" value="F:DNA polymerase processivity factor activity"/>
    <property type="evidence" value="ECO:0007669"/>
    <property type="project" value="InterPro"/>
</dbReference>
<dbReference type="GO" id="GO:0006272">
    <property type="term" value="P:leading strand elongation"/>
    <property type="evidence" value="ECO:0007669"/>
    <property type="project" value="TreeGrafter"/>
</dbReference>
<dbReference type="GO" id="GO:0006298">
    <property type="term" value="P:mismatch repair"/>
    <property type="evidence" value="ECO:0007669"/>
    <property type="project" value="TreeGrafter"/>
</dbReference>
<dbReference type="GO" id="GO:0006275">
    <property type="term" value="P:regulation of DNA replication"/>
    <property type="evidence" value="ECO:0007669"/>
    <property type="project" value="InterPro"/>
</dbReference>
<dbReference type="GO" id="GO:0019985">
    <property type="term" value="P:translesion synthesis"/>
    <property type="evidence" value="ECO:0007669"/>
    <property type="project" value="TreeGrafter"/>
</dbReference>
<dbReference type="CDD" id="cd00577">
    <property type="entry name" value="PCNA"/>
    <property type="match status" value="1"/>
</dbReference>
<dbReference type="Gene3D" id="3.70.10.10">
    <property type="match status" value="1"/>
</dbReference>
<dbReference type="HAMAP" id="MF_00317">
    <property type="entry name" value="DNApol_clamp_arch"/>
    <property type="match status" value="1"/>
</dbReference>
<dbReference type="InterPro" id="IPR046938">
    <property type="entry name" value="DNA_clamp_sf"/>
</dbReference>
<dbReference type="InterPro" id="IPR000730">
    <property type="entry name" value="Pr_cel_nuc_antig"/>
</dbReference>
<dbReference type="InterPro" id="IPR022649">
    <property type="entry name" value="Pr_cel_nuc_antig_C"/>
</dbReference>
<dbReference type="InterPro" id="IPR022659">
    <property type="entry name" value="Pr_cel_nuc_antig_CS"/>
</dbReference>
<dbReference type="InterPro" id="IPR022648">
    <property type="entry name" value="Pr_cel_nuc_antig_N"/>
</dbReference>
<dbReference type="NCBIfam" id="TIGR00590">
    <property type="entry name" value="pcna"/>
    <property type="match status" value="1"/>
</dbReference>
<dbReference type="PANTHER" id="PTHR11352">
    <property type="entry name" value="PROLIFERATING CELL NUCLEAR ANTIGEN"/>
    <property type="match status" value="1"/>
</dbReference>
<dbReference type="PANTHER" id="PTHR11352:SF0">
    <property type="entry name" value="PROLIFERATING CELL NUCLEAR ANTIGEN"/>
    <property type="match status" value="1"/>
</dbReference>
<dbReference type="Pfam" id="PF02747">
    <property type="entry name" value="PCNA_C"/>
    <property type="match status" value="1"/>
</dbReference>
<dbReference type="Pfam" id="PF00705">
    <property type="entry name" value="PCNA_N"/>
    <property type="match status" value="1"/>
</dbReference>
<dbReference type="PRINTS" id="PR00339">
    <property type="entry name" value="PCNACYCLIN"/>
</dbReference>
<dbReference type="SUPFAM" id="SSF55979">
    <property type="entry name" value="DNA clamp"/>
    <property type="match status" value="2"/>
</dbReference>
<dbReference type="PROSITE" id="PS01251">
    <property type="entry name" value="PCNA_1"/>
    <property type="match status" value="1"/>
</dbReference>
<protein>
    <recommendedName>
        <fullName>Probable DNA polymerase sliding clamp 2</fullName>
    </recommendedName>
    <alternativeName>
        <fullName>Proliferating cell nuclear antigen homolog 2</fullName>
        <shortName>PCNA 2</shortName>
    </alternativeName>
</protein>
<gene>
    <name type="ordered locus">A574L</name>
</gene>
<feature type="chain" id="PRO_0000149227" description="Probable DNA polymerase sliding clamp 2">
    <location>
        <begin position="1"/>
        <end position="264"/>
    </location>
</feature>
<feature type="DNA-binding region" evidence="2">
    <location>
        <begin position="75"/>
        <end position="94"/>
    </location>
</feature>
<comment type="function">
    <text evidence="1">Sliding clamp subunit. Responsible for tethering the catalytic subunit of DNA polymerase to DNA during high-speed replication (By similarity).</text>
</comment>
<comment type="similarity">
    <text evidence="3">Belongs to the PCNA family.</text>
</comment>